<gene>
    <name type="primary">COIII</name>
</gene>
<accession>Q34943</accession>
<protein>
    <recommendedName>
        <fullName>Cytochrome c oxidase subunit 3</fullName>
        <ecNumber>7.1.1.9</ecNumber>
    </recommendedName>
    <alternativeName>
        <fullName>Cytochrome c oxidase polypeptide III</fullName>
    </alternativeName>
</protein>
<proteinExistence type="inferred from homology"/>
<name>COX3_LUMTE</name>
<dbReference type="EC" id="7.1.1.9"/>
<dbReference type="EMBL" id="U24570">
    <property type="protein sequence ID" value="AAC46867.1"/>
    <property type="molecule type" value="Genomic_DNA"/>
</dbReference>
<dbReference type="PIR" id="S58988">
    <property type="entry name" value="S58988"/>
</dbReference>
<dbReference type="RefSeq" id="NP_008241.1">
    <property type="nucleotide sequence ID" value="NC_001673.1"/>
</dbReference>
<dbReference type="SMR" id="Q34943"/>
<dbReference type="GeneID" id="807926"/>
<dbReference type="CTD" id="4514"/>
<dbReference type="GO" id="GO:0005743">
    <property type="term" value="C:mitochondrial inner membrane"/>
    <property type="evidence" value="ECO:0007669"/>
    <property type="project" value="UniProtKB-SubCell"/>
</dbReference>
<dbReference type="GO" id="GO:0004129">
    <property type="term" value="F:cytochrome-c oxidase activity"/>
    <property type="evidence" value="ECO:0007669"/>
    <property type="project" value="UniProtKB-EC"/>
</dbReference>
<dbReference type="GO" id="GO:0006123">
    <property type="term" value="P:mitochondrial electron transport, cytochrome c to oxygen"/>
    <property type="evidence" value="ECO:0007669"/>
    <property type="project" value="TreeGrafter"/>
</dbReference>
<dbReference type="CDD" id="cd01665">
    <property type="entry name" value="Cyt_c_Oxidase_III"/>
    <property type="match status" value="1"/>
</dbReference>
<dbReference type="FunFam" id="1.20.120.80:FF:000002">
    <property type="entry name" value="Cytochrome c oxidase subunit 3"/>
    <property type="match status" value="1"/>
</dbReference>
<dbReference type="Gene3D" id="1.10.287.70">
    <property type="match status" value="1"/>
</dbReference>
<dbReference type="Gene3D" id="1.20.120.80">
    <property type="entry name" value="Cytochrome c oxidase, subunit III, four-helix bundle"/>
    <property type="match status" value="1"/>
</dbReference>
<dbReference type="InterPro" id="IPR024791">
    <property type="entry name" value="Cyt_c/ubiquinol_Oxase_su3"/>
</dbReference>
<dbReference type="InterPro" id="IPR033945">
    <property type="entry name" value="Cyt_c_oxase_su3_dom"/>
</dbReference>
<dbReference type="InterPro" id="IPR000298">
    <property type="entry name" value="Cyt_c_oxidase-like_su3"/>
</dbReference>
<dbReference type="InterPro" id="IPR035973">
    <property type="entry name" value="Cyt_c_oxidase_su3-like_sf"/>
</dbReference>
<dbReference type="InterPro" id="IPR013833">
    <property type="entry name" value="Cyt_c_oxidase_su3_a-hlx"/>
</dbReference>
<dbReference type="PANTHER" id="PTHR11403:SF7">
    <property type="entry name" value="CYTOCHROME C OXIDASE SUBUNIT 3"/>
    <property type="match status" value="1"/>
</dbReference>
<dbReference type="PANTHER" id="PTHR11403">
    <property type="entry name" value="CYTOCHROME C OXIDASE SUBUNIT III"/>
    <property type="match status" value="1"/>
</dbReference>
<dbReference type="Pfam" id="PF00510">
    <property type="entry name" value="COX3"/>
    <property type="match status" value="1"/>
</dbReference>
<dbReference type="SUPFAM" id="SSF81452">
    <property type="entry name" value="Cytochrome c oxidase subunit III-like"/>
    <property type="match status" value="1"/>
</dbReference>
<dbReference type="PROSITE" id="PS50253">
    <property type="entry name" value="COX3"/>
    <property type="match status" value="1"/>
</dbReference>
<keyword id="KW-0472">Membrane</keyword>
<keyword id="KW-0496">Mitochondrion</keyword>
<keyword id="KW-0999">Mitochondrion inner membrane</keyword>
<keyword id="KW-1278">Translocase</keyword>
<keyword id="KW-0812">Transmembrane</keyword>
<keyword id="KW-1133">Transmembrane helix</keyword>
<organism>
    <name type="scientific">Lumbricus terrestris</name>
    <name type="common">Common earthworm</name>
    <dbReference type="NCBI Taxonomy" id="6398"/>
    <lineage>
        <taxon>Eukaryota</taxon>
        <taxon>Metazoa</taxon>
        <taxon>Spiralia</taxon>
        <taxon>Lophotrochozoa</taxon>
        <taxon>Annelida</taxon>
        <taxon>Clitellata</taxon>
        <taxon>Oligochaeta</taxon>
        <taxon>Crassiclitellata</taxon>
        <taxon>Lumbricina</taxon>
        <taxon>Lumbricidae</taxon>
        <taxon>Lumbricinae</taxon>
        <taxon>Lumbricus</taxon>
    </lineage>
</organism>
<sequence>MIRQPFHLVEYSPWPLTSSIGAFTLAIGLASWFHNHGFLCLTLAAFLIIVSMIQWWRDVVREGTYMGHHTSLVTTGLRWGMILFITSEVMFFLAFFWAFFHSSLSPTPEIGCSWPPTGIHPLNPFSVPLLNTAVLLASGVTVTWAHHSLMSGKRIDATQALILTVCLGAYFTFLQAGEYMAAPFSIADSVYGTTFFVATGFHGLHVLIGSSFLAICLARTWSHHFSAGHHFGFEAAAWYWHFVDVVWICLYLCIYWWGS</sequence>
<feature type="chain" id="PRO_0000183802" description="Cytochrome c oxidase subunit 3">
    <location>
        <begin position="1"/>
        <end position="259"/>
    </location>
</feature>
<feature type="transmembrane region" description="Helical" evidence="2">
    <location>
        <begin position="13"/>
        <end position="33"/>
    </location>
</feature>
<feature type="transmembrane region" description="Helical" evidence="2">
    <location>
        <begin position="36"/>
        <end position="56"/>
    </location>
</feature>
<feature type="transmembrane region" description="Helical" evidence="2">
    <location>
        <begin position="80"/>
        <end position="100"/>
    </location>
</feature>
<feature type="transmembrane region" description="Helical" evidence="2">
    <location>
        <begin position="125"/>
        <end position="145"/>
    </location>
</feature>
<feature type="transmembrane region" description="Helical" evidence="2">
    <location>
        <begin position="160"/>
        <end position="180"/>
    </location>
</feature>
<feature type="transmembrane region" description="Helical" evidence="2">
    <location>
        <begin position="195"/>
        <end position="215"/>
    </location>
</feature>
<feature type="transmembrane region" description="Helical" evidence="2">
    <location>
        <begin position="237"/>
        <end position="257"/>
    </location>
</feature>
<comment type="function">
    <text evidence="1">Component of the cytochrome c oxidase, the last enzyme in the mitochondrial electron transport chain which drives oxidative phosphorylation. The respiratory chain contains 3 multisubunit complexes succinate dehydrogenase (complex II, CII), ubiquinol-cytochrome c oxidoreductase (cytochrome b-c1 complex, complex III, CIII) and cytochrome c oxidase (complex IV, CIV), that cooperate to transfer electrons derived from NADH and succinate to molecular oxygen, creating an electrochemical gradient over the inner membrane that drives transmembrane transport and the ATP synthase. Cytochrome c oxidase is the component of the respiratory chain that catalyzes the reduction of oxygen to water. Electrons originating from reduced cytochrome c in the intermembrane space (IMS) are transferred via the dinuclear copper A center (CU(A)) of subunit 2 and heme A of subunit 1 to the active site in subunit 1, a binuclear center (BNC) formed by heme A3 and copper B (CU(B)). The BNC reduces molecular oxygen to 2 water molecules using 4 electrons from cytochrome c in the IMS and 4 protons from the mitochondrial matrix.</text>
</comment>
<comment type="catalytic activity">
    <reaction evidence="1">
        <text>4 Fe(II)-[cytochrome c] + O2 + 8 H(+)(in) = 4 Fe(III)-[cytochrome c] + 2 H2O + 4 H(+)(out)</text>
        <dbReference type="Rhea" id="RHEA:11436"/>
        <dbReference type="Rhea" id="RHEA-COMP:10350"/>
        <dbReference type="Rhea" id="RHEA-COMP:14399"/>
        <dbReference type="ChEBI" id="CHEBI:15377"/>
        <dbReference type="ChEBI" id="CHEBI:15378"/>
        <dbReference type="ChEBI" id="CHEBI:15379"/>
        <dbReference type="ChEBI" id="CHEBI:29033"/>
        <dbReference type="ChEBI" id="CHEBI:29034"/>
        <dbReference type="EC" id="7.1.1.9"/>
    </reaction>
    <physiologicalReaction direction="left-to-right" evidence="1">
        <dbReference type="Rhea" id="RHEA:11437"/>
    </physiologicalReaction>
</comment>
<comment type="subunit">
    <text evidence="1">Component of the cytochrome c oxidase (complex IV, CIV), a multisubunit enzyme composed of a catalytic core of 3 subunits and several supernumerary subunits. The complex exists as a monomer or a dimer and forms supercomplexes (SCs) in the inner mitochondrial membrane with ubiquinol-cytochrome c oxidoreductase (cytochrome b-c1 complex, complex III, CIII).</text>
</comment>
<comment type="subcellular location">
    <subcellularLocation>
        <location evidence="1">Mitochondrion inner membrane</location>
        <topology evidence="1">Multi-pass membrane protein</topology>
    </subcellularLocation>
</comment>
<comment type="similarity">
    <text evidence="3">Belongs to the cytochrome c oxidase subunit 3 family.</text>
</comment>
<evidence type="ECO:0000250" key="1">
    <source>
        <dbReference type="UniProtKB" id="P00420"/>
    </source>
</evidence>
<evidence type="ECO:0000255" key="2"/>
<evidence type="ECO:0000305" key="3"/>
<geneLocation type="mitochondrion"/>
<reference key="1">
    <citation type="journal article" date="1995" name="Genetics">
        <title>Complete sequence of the mitochondrial DNA of the annelid worm Lumbricus terrestris.</title>
        <authorList>
            <person name="Boore J.L."/>
            <person name="Brown W.M."/>
        </authorList>
    </citation>
    <scope>NUCLEOTIDE SEQUENCE [GENOMIC DNA]</scope>
</reference>